<evidence type="ECO:0000250" key="1"/>
<evidence type="ECO:0000256" key="2">
    <source>
        <dbReference type="SAM" id="MobiDB-lite"/>
    </source>
</evidence>
<evidence type="ECO:0000269" key="3">
    <source>
    </source>
</evidence>
<evidence type="ECO:0000305" key="4"/>
<accession>Q41575</accession>
<protein>
    <recommendedName>
        <fullName>Histone H2B.6</fullName>
    </recommendedName>
    <alternativeName>
        <fullName>H2B123</fullName>
    </alternativeName>
</protein>
<reference key="1">
    <citation type="journal article" date="1995" name="Plant Mol. Biol.">
        <title>Structural and functional characterization of two wheat histone H2B promoters.</title>
        <authorList>
            <person name="Yang P."/>
            <person name="Taoka K."/>
            <person name="Nakayma T."/>
            <person name="Iwabuchi M."/>
        </authorList>
    </citation>
    <scope>NUCLEOTIDE SEQUENCE [GENOMIC DNA]</scope>
    <scope>TISSUE SPECIFICITY</scope>
</reference>
<reference key="2">
    <citation type="journal article" date="1990" name="Plant Physiol.">
        <title>Phosphorylation of plant H2A histones.</title>
        <authorList>
            <person name="Green G.R."/>
            <person name="Gustavsen L.C."/>
            <person name="Poccia D.L."/>
        </authorList>
    </citation>
    <scope>LACK OF PHOSPHORYLATION</scope>
</reference>
<proteinExistence type="evidence at protein level"/>
<dbReference type="EMBL" id="D37944">
    <property type="protein sequence ID" value="BAA07158.1"/>
    <property type="molecule type" value="Genomic_DNA"/>
</dbReference>
<dbReference type="PIR" id="S56686">
    <property type="entry name" value="S56686"/>
</dbReference>
<dbReference type="SMR" id="Q41575"/>
<dbReference type="STRING" id="4565.Q41575"/>
<dbReference type="PaxDb" id="4565-Traes_3AL_128AB5D12.1"/>
<dbReference type="EnsemblPlants" id="TraesARI3A03G01483110.1">
    <property type="protein sequence ID" value="TraesARI3A03G01483110.1.CDS1"/>
    <property type="gene ID" value="TraesARI3A03G01483110"/>
</dbReference>
<dbReference type="EnsemblPlants" id="TraesJAG3A03G01470350.1">
    <property type="protein sequence ID" value="TraesJAG3A03G01470350.1.CDS1"/>
    <property type="gene ID" value="TraesJAG3A03G01470350"/>
</dbReference>
<dbReference type="EnsemblPlants" id="TraesLAC3A03G01405540.1">
    <property type="protein sequence ID" value="TraesLAC3A03G01405540.1.CDS1"/>
    <property type="gene ID" value="TraesLAC3A03G01405540"/>
</dbReference>
<dbReference type="EnsemblPlants" id="TraesLDM3A03G01462230.1">
    <property type="protein sequence ID" value="TraesLDM3A03G01462230.1.CDS1"/>
    <property type="gene ID" value="TraesLDM3A03G01462230"/>
</dbReference>
<dbReference type="EnsemblPlants" id="TraesNOR3A03G01482410.1">
    <property type="protein sequence ID" value="TraesNOR3A03G01482410.1.CDS1"/>
    <property type="gene ID" value="TraesNOR3A03G01482410"/>
</dbReference>
<dbReference type="Gramene" id="TraesARI3A03G01483110.1">
    <property type="protein sequence ID" value="TraesARI3A03G01483110.1.CDS1"/>
    <property type="gene ID" value="TraesARI3A03G01483110"/>
</dbReference>
<dbReference type="Gramene" id="TraesJAG3A03G01470350.1">
    <property type="protein sequence ID" value="TraesJAG3A03G01470350.1.CDS1"/>
    <property type="gene ID" value="TraesJAG3A03G01470350"/>
</dbReference>
<dbReference type="Gramene" id="TraesLAC3A03G01405540.1">
    <property type="protein sequence ID" value="TraesLAC3A03G01405540.1.CDS1"/>
    <property type="gene ID" value="TraesLAC3A03G01405540"/>
</dbReference>
<dbReference type="Gramene" id="TraesLDM3A03G01462230.1">
    <property type="protein sequence ID" value="TraesLDM3A03G01462230.1.CDS1"/>
    <property type="gene ID" value="TraesLDM3A03G01462230"/>
</dbReference>
<dbReference type="Gramene" id="TraesNOR3A03G01482410.1">
    <property type="protein sequence ID" value="TraesNOR3A03G01482410.1.CDS1"/>
    <property type="gene ID" value="TraesNOR3A03G01482410"/>
</dbReference>
<dbReference type="eggNOG" id="KOG1744">
    <property type="taxonomic scope" value="Eukaryota"/>
</dbReference>
<dbReference type="HOGENOM" id="CLU_075666_1_0_1"/>
<dbReference type="Proteomes" id="UP000019116">
    <property type="component" value="Unplaced"/>
</dbReference>
<dbReference type="ExpressionAtlas" id="Q41575">
    <property type="expression patterns" value="baseline and differential"/>
</dbReference>
<dbReference type="GO" id="GO:0000786">
    <property type="term" value="C:nucleosome"/>
    <property type="evidence" value="ECO:0007669"/>
    <property type="project" value="UniProtKB-KW"/>
</dbReference>
<dbReference type="GO" id="GO:0005634">
    <property type="term" value="C:nucleus"/>
    <property type="evidence" value="ECO:0007669"/>
    <property type="project" value="UniProtKB-SubCell"/>
</dbReference>
<dbReference type="GO" id="GO:0003677">
    <property type="term" value="F:DNA binding"/>
    <property type="evidence" value="ECO:0000318"/>
    <property type="project" value="GO_Central"/>
</dbReference>
<dbReference type="GO" id="GO:0046982">
    <property type="term" value="F:protein heterodimerization activity"/>
    <property type="evidence" value="ECO:0007669"/>
    <property type="project" value="InterPro"/>
</dbReference>
<dbReference type="GO" id="GO:0030527">
    <property type="term" value="F:structural constituent of chromatin"/>
    <property type="evidence" value="ECO:0007669"/>
    <property type="project" value="InterPro"/>
</dbReference>
<dbReference type="CDD" id="cd22910">
    <property type="entry name" value="HFD_H2B"/>
    <property type="match status" value="1"/>
</dbReference>
<dbReference type="FunFam" id="1.10.20.10:FF:000016">
    <property type="entry name" value="Histone H2B"/>
    <property type="match status" value="1"/>
</dbReference>
<dbReference type="Gene3D" id="1.10.20.10">
    <property type="entry name" value="Histone, subunit A"/>
    <property type="match status" value="1"/>
</dbReference>
<dbReference type="InterPro" id="IPR009072">
    <property type="entry name" value="Histone-fold"/>
</dbReference>
<dbReference type="InterPro" id="IPR007125">
    <property type="entry name" value="Histone_H2A/H2B/H3"/>
</dbReference>
<dbReference type="InterPro" id="IPR000558">
    <property type="entry name" value="Histone_H2B"/>
</dbReference>
<dbReference type="PANTHER" id="PTHR23428">
    <property type="entry name" value="HISTONE H2B"/>
    <property type="match status" value="1"/>
</dbReference>
<dbReference type="Pfam" id="PF00125">
    <property type="entry name" value="Histone"/>
    <property type="match status" value="1"/>
</dbReference>
<dbReference type="PRINTS" id="PR00621">
    <property type="entry name" value="HISTONEH2B"/>
</dbReference>
<dbReference type="SMART" id="SM00427">
    <property type="entry name" value="H2B"/>
    <property type="match status" value="1"/>
</dbReference>
<dbReference type="SUPFAM" id="SSF47113">
    <property type="entry name" value="Histone-fold"/>
    <property type="match status" value="1"/>
</dbReference>
<sequence length="121" mass="13530">MAPKAEKKPKVEKRVPGKEGETSKKKAKKSNETYKIYIFKVLKQIDPNMGISSKSMSIINSIINDIFEKLAGESAKLARYNKKPTITSREIQTAVRLVFPGELAKHAVSEGTKAVTRFTVY</sequence>
<gene>
    <name type="primary">TH123</name>
</gene>
<organism>
    <name type="scientific">Triticum aestivum</name>
    <name type="common">Wheat</name>
    <dbReference type="NCBI Taxonomy" id="4565"/>
    <lineage>
        <taxon>Eukaryota</taxon>
        <taxon>Viridiplantae</taxon>
        <taxon>Streptophyta</taxon>
        <taxon>Embryophyta</taxon>
        <taxon>Tracheophyta</taxon>
        <taxon>Spermatophyta</taxon>
        <taxon>Magnoliopsida</taxon>
        <taxon>Liliopsida</taxon>
        <taxon>Poales</taxon>
        <taxon>Poaceae</taxon>
        <taxon>BOP clade</taxon>
        <taxon>Pooideae</taxon>
        <taxon>Triticodae</taxon>
        <taxon>Triticeae</taxon>
        <taxon>Triticinae</taxon>
        <taxon>Triticum</taxon>
    </lineage>
</organism>
<name>H2B6_WHEAT</name>
<keyword id="KW-0007">Acetylation</keyword>
<keyword id="KW-0158">Chromosome</keyword>
<keyword id="KW-0238">DNA-binding</keyword>
<keyword id="KW-0544">Nucleosome core</keyword>
<keyword id="KW-0539">Nucleus</keyword>
<keyword id="KW-1185">Reference proteome</keyword>
<comment type="function">
    <text>Core component of nucleosome. Nucleosomes wrap and compact DNA into chromatin, limiting DNA accessibility to the cellular machineries which require DNA as a template. Histones thereby play a central role in transcription regulation, DNA repair, DNA replication and chromosomal stability. DNA accessibility is regulated via a complex set of post-translational modifications of histones, also called histone code, and nucleosome remodeling.</text>
</comment>
<comment type="subunit">
    <text>The nucleosome is a histone octamer containing two molecules each of H2A, H2B, H3 and H4 assembled in one H3-H4 heterotetramer and two H2A-H2B heterodimers. The octamer wraps approximately 147 bp of DNA.</text>
</comment>
<comment type="subcellular location">
    <subcellularLocation>
        <location evidence="1">Nucleus</location>
    </subcellularLocation>
    <subcellularLocation>
        <location evidence="1">Chromosome</location>
    </subcellularLocation>
</comment>
<comment type="tissue specificity">
    <text evidence="3">Expressed preferentially in meristematic tissues.</text>
</comment>
<comment type="PTM">
    <text evidence="1">Can be acetylated to form H2BK6ac and H2BK33ac.</text>
</comment>
<comment type="miscellaneous">
    <text>Phosphorylation of H2B was not detected.</text>
</comment>
<comment type="similarity">
    <text evidence="4">Belongs to the histone H2B family.</text>
</comment>
<comment type="caution">
    <text evidence="4">To ensure consistency between histone entries, we follow the 'Brno' nomenclature for histone modifications, with positions referring to those used in the literature for the 'closest' model organism. Due to slight variations in histone sequences between organisms and to the presence of initiator methionine in UniProtKB/Swiss-Prot sequences, the actual positions of modified amino acids in the sequence generally differ. In this entry the following conventions are used: H2BK6ac = acetylated Lys-7; H2BK33ac = acetylated Lys-13.</text>
</comment>
<feature type="initiator methionine" description="Removed" evidence="1">
    <location>
        <position position="1"/>
    </location>
</feature>
<feature type="chain" id="PRO_0000239424" description="Histone H2B.6">
    <location>
        <begin position="2"/>
        <end position="121"/>
    </location>
</feature>
<feature type="region of interest" description="Disordered" evidence="2">
    <location>
        <begin position="1"/>
        <end position="28"/>
    </location>
</feature>
<feature type="modified residue" description="N6-acetyllysine" evidence="1">
    <location>
        <position position="7"/>
    </location>
</feature>
<feature type="modified residue" description="N6-acetyllysine" evidence="1">
    <location>
        <position position="13"/>
    </location>
</feature>